<keyword id="KW-0963">Cytoplasm</keyword>
<keyword id="KW-0342">GTP-binding</keyword>
<keyword id="KW-0436">Ligase</keyword>
<keyword id="KW-0460">Magnesium</keyword>
<keyword id="KW-0479">Metal-binding</keyword>
<keyword id="KW-0547">Nucleotide-binding</keyword>
<keyword id="KW-0658">Purine biosynthesis</keyword>
<keyword id="KW-1185">Reference proteome</keyword>
<dbReference type="EC" id="6.3.4.4" evidence="2"/>
<dbReference type="EMBL" id="AE016815">
    <property type="protein sequence ID" value="AAS50585.2"/>
    <property type="molecule type" value="Genomic_DNA"/>
</dbReference>
<dbReference type="RefSeq" id="NP_982761.2">
    <property type="nucleotide sequence ID" value="NM_208114.2"/>
</dbReference>
<dbReference type="SMR" id="Q75E56"/>
<dbReference type="FunCoup" id="Q75E56">
    <property type="interactions" value="835"/>
</dbReference>
<dbReference type="STRING" id="284811.Q75E56"/>
<dbReference type="EnsemblFungi" id="AAS50585">
    <property type="protein sequence ID" value="AAS50585"/>
    <property type="gene ID" value="AGOS_ABL186W"/>
</dbReference>
<dbReference type="GeneID" id="4618841"/>
<dbReference type="KEGG" id="ago:AGOS_ABL186W"/>
<dbReference type="eggNOG" id="KOG1355">
    <property type="taxonomic scope" value="Eukaryota"/>
</dbReference>
<dbReference type="HOGENOM" id="CLU_029848_3_0_1"/>
<dbReference type="InParanoid" id="Q75E56"/>
<dbReference type="OMA" id="FHHAKPI"/>
<dbReference type="OrthoDB" id="10265645at2759"/>
<dbReference type="UniPathway" id="UPA00075">
    <property type="reaction ID" value="UER00335"/>
</dbReference>
<dbReference type="Proteomes" id="UP000000591">
    <property type="component" value="Chromosome II"/>
</dbReference>
<dbReference type="GO" id="GO:0005737">
    <property type="term" value="C:cytoplasm"/>
    <property type="evidence" value="ECO:0000318"/>
    <property type="project" value="GO_Central"/>
</dbReference>
<dbReference type="GO" id="GO:0004019">
    <property type="term" value="F:adenylosuccinate synthase activity"/>
    <property type="evidence" value="ECO:0000318"/>
    <property type="project" value="GO_Central"/>
</dbReference>
<dbReference type="GO" id="GO:0003688">
    <property type="term" value="F:DNA replication origin binding"/>
    <property type="evidence" value="ECO:0007669"/>
    <property type="project" value="EnsemblFungi"/>
</dbReference>
<dbReference type="GO" id="GO:0005525">
    <property type="term" value="F:GTP binding"/>
    <property type="evidence" value="ECO:0007669"/>
    <property type="project" value="UniProtKB-UniRule"/>
</dbReference>
<dbReference type="GO" id="GO:0000287">
    <property type="term" value="F:magnesium ion binding"/>
    <property type="evidence" value="ECO:0007669"/>
    <property type="project" value="UniProtKB-UniRule"/>
</dbReference>
<dbReference type="GO" id="GO:0044208">
    <property type="term" value="P:'de novo' AMP biosynthetic process"/>
    <property type="evidence" value="ECO:0000318"/>
    <property type="project" value="GO_Central"/>
</dbReference>
<dbReference type="GO" id="GO:0046040">
    <property type="term" value="P:IMP metabolic process"/>
    <property type="evidence" value="ECO:0000318"/>
    <property type="project" value="GO_Central"/>
</dbReference>
<dbReference type="CDD" id="cd03108">
    <property type="entry name" value="AdSS"/>
    <property type="match status" value="1"/>
</dbReference>
<dbReference type="FunFam" id="3.90.170.10:FF:000001">
    <property type="entry name" value="Adenylosuccinate synthetase"/>
    <property type="match status" value="1"/>
</dbReference>
<dbReference type="FunFam" id="1.10.300.10:FF:000002">
    <property type="entry name" value="Adenylosuccinate synthetase, chloroplastic"/>
    <property type="match status" value="1"/>
</dbReference>
<dbReference type="Gene3D" id="3.40.440.10">
    <property type="entry name" value="Adenylosuccinate Synthetase, subunit A, domain 1"/>
    <property type="match status" value="1"/>
</dbReference>
<dbReference type="Gene3D" id="1.10.300.10">
    <property type="entry name" value="Adenylosuccinate Synthetase, subunit A, domain 2"/>
    <property type="match status" value="1"/>
</dbReference>
<dbReference type="Gene3D" id="3.90.170.10">
    <property type="entry name" value="Adenylosuccinate Synthetase, subunit A, domain 3"/>
    <property type="match status" value="1"/>
</dbReference>
<dbReference type="HAMAP" id="MF_00011">
    <property type="entry name" value="Adenylosucc_synth"/>
    <property type="match status" value="1"/>
</dbReference>
<dbReference type="InterPro" id="IPR018220">
    <property type="entry name" value="Adenylosuccin_syn_GTP-bd"/>
</dbReference>
<dbReference type="InterPro" id="IPR033128">
    <property type="entry name" value="Adenylosuccin_syn_Lys_AS"/>
</dbReference>
<dbReference type="InterPro" id="IPR042109">
    <property type="entry name" value="Adenylosuccinate_synth_dom1"/>
</dbReference>
<dbReference type="InterPro" id="IPR042110">
    <property type="entry name" value="Adenylosuccinate_synth_dom2"/>
</dbReference>
<dbReference type="InterPro" id="IPR042111">
    <property type="entry name" value="Adenylosuccinate_synth_dom3"/>
</dbReference>
<dbReference type="InterPro" id="IPR001114">
    <property type="entry name" value="Adenylosuccinate_synthetase"/>
</dbReference>
<dbReference type="InterPro" id="IPR027417">
    <property type="entry name" value="P-loop_NTPase"/>
</dbReference>
<dbReference type="NCBIfam" id="NF002223">
    <property type="entry name" value="PRK01117.1"/>
    <property type="match status" value="1"/>
</dbReference>
<dbReference type="NCBIfam" id="TIGR00184">
    <property type="entry name" value="purA"/>
    <property type="match status" value="1"/>
</dbReference>
<dbReference type="PANTHER" id="PTHR11846">
    <property type="entry name" value="ADENYLOSUCCINATE SYNTHETASE"/>
    <property type="match status" value="1"/>
</dbReference>
<dbReference type="PANTHER" id="PTHR11846:SF0">
    <property type="entry name" value="ADENYLOSUCCINATE SYNTHETASE"/>
    <property type="match status" value="1"/>
</dbReference>
<dbReference type="Pfam" id="PF00709">
    <property type="entry name" value="Adenylsucc_synt"/>
    <property type="match status" value="1"/>
</dbReference>
<dbReference type="SMART" id="SM00788">
    <property type="entry name" value="Adenylsucc_synt"/>
    <property type="match status" value="1"/>
</dbReference>
<dbReference type="SUPFAM" id="SSF52540">
    <property type="entry name" value="P-loop containing nucleoside triphosphate hydrolases"/>
    <property type="match status" value="1"/>
</dbReference>
<dbReference type="PROSITE" id="PS01266">
    <property type="entry name" value="ADENYLOSUCCIN_SYN_1"/>
    <property type="match status" value="1"/>
</dbReference>
<dbReference type="PROSITE" id="PS00513">
    <property type="entry name" value="ADENYLOSUCCIN_SYN_2"/>
    <property type="match status" value="1"/>
</dbReference>
<sequence length="433" mass="48235">MVNVVLGSQWGDEGKGKLVDLLVSKYDIVARSAGGNNAGHTIVVGGIKYDFHMLPSGLVNPNCQNLIGNGVVIHVPSFFGELEQLEAKGLRDARGRLFISSRAHLVFDFHQRTDKLRELELSGKSKDGKNIGTTGKGIGPTYSTKASRSGLRVHHLVSEQPEAWAEFETKYRRLLETRQQRYGPFEHDAEEELARYRRYREELRPFVVDSVVFMHNAIQQKKKILVEGANALMLDIDFGTYPYVTSSSTGIGGVLTGLGIPPRCIDEIYGVVKAYTTRVGEGPFPTEQLNEAGDKLQTIGAEYGVTTGRKRRCGWLDLVVLKYSTLINGFTSLNITKLDVLDTFKEIKVGISYSLNGKKLDLFPEDLLVLSKVDVEYVTLPGWDEDITKISRYEDLPENAKSYLKFIEDFVGVPVEWVGTGPGRESMLHKEVS</sequence>
<reference key="1">
    <citation type="journal article" date="2004" name="Science">
        <title>The Ashbya gossypii genome as a tool for mapping the ancient Saccharomyces cerevisiae genome.</title>
        <authorList>
            <person name="Dietrich F.S."/>
            <person name="Voegeli S."/>
            <person name="Brachat S."/>
            <person name="Lerch A."/>
            <person name="Gates K."/>
            <person name="Steiner S."/>
            <person name="Mohr C."/>
            <person name="Poehlmann R."/>
            <person name="Luedi P."/>
            <person name="Choi S."/>
            <person name="Wing R.A."/>
            <person name="Flavier A."/>
            <person name="Gaffney T.D."/>
            <person name="Philippsen P."/>
        </authorList>
    </citation>
    <scope>NUCLEOTIDE SEQUENCE [LARGE SCALE GENOMIC DNA]</scope>
    <source>
        <strain>ATCC 10895 / CBS 109.51 / FGSC 9923 / NRRL Y-1056</strain>
    </source>
</reference>
<reference key="2">
    <citation type="journal article" date="2013" name="G3 (Bethesda)">
        <title>Genomes of Ashbya fungi isolated from insects reveal four mating-type loci, numerous translocations, lack of transposons, and distinct gene duplications.</title>
        <authorList>
            <person name="Dietrich F.S."/>
            <person name="Voegeli S."/>
            <person name="Kuo S."/>
            <person name="Philippsen P."/>
        </authorList>
    </citation>
    <scope>GENOME REANNOTATION</scope>
    <source>
        <strain>ATCC 10895 / CBS 109.51 / FGSC 9923 / NRRL Y-1056</strain>
    </source>
</reference>
<comment type="function">
    <text evidence="1">Plays an important role in the de novo pathway and in the salvage pathway of purine nucleotide biosynthesis. Catalyzes the first committed step in the biosynthesis of AMP from IMP (By similarity).</text>
</comment>
<comment type="catalytic activity">
    <reaction evidence="2">
        <text>IMP + L-aspartate + GTP = N(6)-(1,2-dicarboxyethyl)-AMP + GDP + phosphate + 2 H(+)</text>
        <dbReference type="Rhea" id="RHEA:15753"/>
        <dbReference type="ChEBI" id="CHEBI:15378"/>
        <dbReference type="ChEBI" id="CHEBI:29991"/>
        <dbReference type="ChEBI" id="CHEBI:37565"/>
        <dbReference type="ChEBI" id="CHEBI:43474"/>
        <dbReference type="ChEBI" id="CHEBI:57567"/>
        <dbReference type="ChEBI" id="CHEBI:58053"/>
        <dbReference type="ChEBI" id="CHEBI:58189"/>
        <dbReference type="EC" id="6.3.4.4"/>
    </reaction>
</comment>
<comment type="cofactor">
    <cofactor evidence="2">
        <name>Mg(2+)</name>
        <dbReference type="ChEBI" id="CHEBI:18420"/>
    </cofactor>
    <text evidence="2">Binds 1 Mg(2+) ion per subunit.</text>
</comment>
<comment type="pathway">
    <text evidence="2">Purine metabolism; AMP biosynthesis via de novo pathway; AMP from IMP: step 1/2.</text>
</comment>
<comment type="subunit">
    <text evidence="2">Homodimer.</text>
</comment>
<comment type="subcellular location">
    <subcellularLocation>
        <location evidence="2">Cytoplasm</location>
    </subcellularLocation>
</comment>
<comment type="similarity">
    <text evidence="2">Belongs to the adenylosuccinate synthetase family.</text>
</comment>
<feature type="chain" id="PRO_0000399318" description="Adenylosuccinate synthetase">
    <location>
        <begin position="1"/>
        <end position="433"/>
    </location>
</feature>
<feature type="active site" description="Proton acceptor" evidence="2">
    <location>
        <position position="12"/>
    </location>
</feature>
<feature type="active site" description="Proton donor" evidence="2">
    <location>
        <position position="40"/>
    </location>
</feature>
<feature type="binding site" evidence="2">
    <location>
        <begin position="11"/>
        <end position="17"/>
    </location>
    <ligand>
        <name>GTP</name>
        <dbReference type="ChEBI" id="CHEBI:37565"/>
    </ligand>
</feature>
<feature type="binding site" description="in other chain" evidence="2">
    <location>
        <begin position="12"/>
        <end position="15"/>
    </location>
    <ligand>
        <name>IMP</name>
        <dbReference type="ChEBI" id="CHEBI:58053"/>
        <note>ligand shared between dimeric partners</note>
    </ligand>
</feature>
<feature type="binding site" evidence="2">
    <location>
        <position position="12"/>
    </location>
    <ligand>
        <name>Mg(2+)</name>
        <dbReference type="ChEBI" id="CHEBI:18420"/>
    </ligand>
</feature>
<feature type="binding site" description="in other chain" evidence="2">
    <location>
        <begin position="37"/>
        <end position="40"/>
    </location>
    <ligand>
        <name>IMP</name>
        <dbReference type="ChEBI" id="CHEBI:58053"/>
        <note>ligand shared between dimeric partners</note>
    </ligand>
</feature>
<feature type="binding site" evidence="2">
    <location>
        <begin position="39"/>
        <end position="41"/>
    </location>
    <ligand>
        <name>GTP</name>
        <dbReference type="ChEBI" id="CHEBI:37565"/>
    </ligand>
</feature>
<feature type="binding site" evidence="2">
    <location>
        <position position="39"/>
    </location>
    <ligand>
        <name>Mg(2+)</name>
        <dbReference type="ChEBI" id="CHEBI:18420"/>
    </ligand>
</feature>
<feature type="binding site" description="in other chain" evidence="2">
    <location>
        <position position="134"/>
    </location>
    <ligand>
        <name>IMP</name>
        <dbReference type="ChEBI" id="CHEBI:58053"/>
        <note>ligand shared between dimeric partners</note>
    </ligand>
</feature>
<feature type="binding site" evidence="2">
    <location>
        <position position="148"/>
    </location>
    <ligand>
        <name>IMP</name>
        <dbReference type="ChEBI" id="CHEBI:58053"/>
        <note>ligand shared between dimeric partners</note>
    </ligand>
</feature>
<feature type="binding site" description="in other chain" evidence="2">
    <location>
        <position position="230"/>
    </location>
    <ligand>
        <name>IMP</name>
        <dbReference type="ChEBI" id="CHEBI:58053"/>
        <note>ligand shared between dimeric partners</note>
    </ligand>
</feature>
<feature type="binding site" description="in other chain" evidence="2">
    <location>
        <position position="245"/>
    </location>
    <ligand>
        <name>IMP</name>
        <dbReference type="ChEBI" id="CHEBI:58053"/>
        <note>ligand shared between dimeric partners</note>
    </ligand>
</feature>
<feature type="binding site" evidence="2">
    <location>
        <begin position="305"/>
        <end position="311"/>
    </location>
    <ligand>
        <name>substrate</name>
    </ligand>
</feature>
<feature type="binding site" description="in other chain" evidence="2">
    <location>
        <position position="309"/>
    </location>
    <ligand>
        <name>IMP</name>
        <dbReference type="ChEBI" id="CHEBI:58053"/>
        <note>ligand shared between dimeric partners</note>
    </ligand>
</feature>
<feature type="binding site" evidence="2">
    <location>
        <position position="311"/>
    </location>
    <ligand>
        <name>GTP</name>
        <dbReference type="ChEBI" id="CHEBI:37565"/>
    </ligand>
</feature>
<feature type="binding site" evidence="2">
    <location>
        <begin position="337"/>
        <end position="339"/>
    </location>
    <ligand>
        <name>GTP</name>
        <dbReference type="ChEBI" id="CHEBI:37565"/>
    </ligand>
</feature>
<feature type="binding site" evidence="2">
    <location>
        <begin position="419"/>
        <end position="421"/>
    </location>
    <ligand>
        <name>GTP</name>
        <dbReference type="ChEBI" id="CHEBI:37565"/>
    </ligand>
</feature>
<proteinExistence type="inferred from homology"/>
<evidence type="ECO:0000250" key="1"/>
<evidence type="ECO:0000255" key="2">
    <source>
        <dbReference type="HAMAP-Rule" id="MF_03125"/>
    </source>
</evidence>
<protein>
    <recommendedName>
        <fullName evidence="2">Adenylosuccinate synthetase</fullName>
        <shortName evidence="2">AMPSase</shortName>
        <shortName evidence="2">AdSS</shortName>
        <ecNumber evidence="2">6.3.4.4</ecNumber>
    </recommendedName>
    <alternativeName>
        <fullName evidence="2">IMP--aspartate ligase</fullName>
    </alternativeName>
</protein>
<gene>
    <name type="ordered locus">ABL186W</name>
</gene>
<name>PURA_EREGS</name>
<accession>Q75E56</accession>
<organism>
    <name type="scientific">Eremothecium gossypii (strain ATCC 10895 / CBS 109.51 / FGSC 9923 / NRRL Y-1056)</name>
    <name type="common">Yeast</name>
    <name type="synonym">Ashbya gossypii</name>
    <dbReference type="NCBI Taxonomy" id="284811"/>
    <lineage>
        <taxon>Eukaryota</taxon>
        <taxon>Fungi</taxon>
        <taxon>Dikarya</taxon>
        <taxon>Ascomycota</taxon>
        <taxon>Saccharomycotina</taxon>
        <taxon>Saccharomycetes</taxon>
        <taxon>Saccharomycetales</taxon>
        <taxon>Saccharomycetaceae</taxon>
        <taxon>Eremothecium</taxon>
    </lineage>
</organism>